<name>RIMP_BURPS</name>
<accession>Q63TP6</accession>
<keyword id="KW-0963">Cytoplasm</keyword>
<keyword id="KW-1185">Reference proteome</keyword>
<keyword id="KW-0690">Ribosome biogenesis</keyword>
<gene>
    <name evidence="1" type="primary">rimP</name>
    <name type="ordered locus">BPSL1920</name>
</gene>
<protein>
    <recommendedName>
        <fullName evidence="1">Ribosome maturation factor RimP</fullName>
    </recommendedName>
</protein>
<sequence>MQLTELIETTVTGLGYELVDLERTGRGMVCVYIDQPAGITIDDCEKVTRQLQHVLTVENIDYERLEVSSPGLDRPLKKLADFTRFAGSEAVITLKKPLDGRKTYRGILHAPNGETIGLEFERKKGEAAMLDFTLADIDKARLIPHVDFRSRKQ</sequence>
<reference key="1">
    <citation type="journal article" date="2004" name="Proc. Natl. Acad. Sci. U.S.A.">
        <title>Genomic plasticity of the causative agent of melioidosis, Burkholderia pseudomallei.</title>
        <authorList>
            <person name="Holden M.T.G."/>
            <person name="Titball R.W."/>
            <person name="Peacock S.J."/>
            <person name="Cerdeno-Tarraga A.-M."/>
            <person name="Atkins T."/>
            <person name="Crossman L.C."/>
            <person name="Pitt T."/>
            <person name="Churcher C."/>
            <person name="Mungall K.L."/>
            <person name="Bentley S.D."/>
            <person name="Sebaihia M."/>
            <person name="Thomson N.R."/>
            <person name="Bason N."/>
            <person name="Beacham I.R."/>
            <person name="Brooks K."/>
            <person name="Brown K.A."/>
            <person name="Brown N.F."/>
            <person name="Challis G.L."/>
            <person name="Cherevach I."/>
            <person name="Chillingworth T."/>
            <person name="Cronin A."/>
            <person name="Crossett B."/>
            <person name="Davis P."/>
            <person name="DeShazer D."/>
            <person name="Feltwell T."/>
            <person name="Fraser A."/>
            <person name="Hance Z."/>
            <person name="Hauser H."/>
            <person name="Holroyd S."/>
            <person name="Jagels K."/>
            <person name="Keith K.E."/>
            <person name="Maddison M."/>
            <person name="Moule S."/>
            <person name="Price C."/>
            <person name="Quail M.A."/>
            <person name="Rabbinowitsch E."/>
            <person name="Rutherford K."/>
            <person name="Sanders M."/>
            <person name="Simmonds M."/>
            <person name="Songsivilai S."/>
            <person name="Stevens K."/>
            <person name="Tumapa S."/>
            <person name="Vesaratchavest M."/>
            <person name="Whitehead S."/>
            <person name="Yeats C."/>
            <person name="Barrell B.G."/>
            <person name="Oyston P.C.F."/>
            <person name="Parkhill J."/>
        </authorList>
    </citation>
    <scope>NUCLEOTIDE SEQUENCE [LARGE SCALE GENOMIC DNA]</scope>
    <source>
        <strain>K96243</strain>
    </source>
</reference>
<organism>
    <name type="scientific">Burkholderia pseudomallei (strain K96243)</name>
    <dbReference type="NCBI Taxonomy" id="272560"/>
    <lineage>
        <taxon>Bacteria</taxon>
        <taxon>Pseudomonadati</taxon>
        <taxon>Pseudomonadota</taxon>
        <taxon>Betaproteobacteria</taxon>
        <taxon>Burkholderiales</taxon>
        <taxon>Burkholderiaceae</taxon>
        <taxon>Burkholderia</taxon>
        <taxon>pseudomallei group</taxon>
    </lineage>
</organism>
<dbReference type="EMBL" id="BX571965">
    <property type="protein sequence ID" value="CAH35920.1"/>
    <property type="molecule type" value="Genomic_DNA"/>
</dbReference>
<dbReference type="RefSeq" id="WP_004193908.1">
    <property type="nucleotide sequence ID" value="NZ_CP009538.1"/>
</dbReference>
<dbReference type="RefSeq" id="YP_108520.1">
    <property type="nucleotide sequence ID" value="NC_006350.1"/>
</dbReference>
<dbReference type="SMR" id="Q63TP6"/>
<dbReference type="STRING" id="272560.BPSL1920"/>
<dbReference type="GeneID" id="93060071"/>
<dbReference type="KEGG" id="bps:BPSL1920"/>
<dbReference type="PATRIC" id="fig|272560.51.peg.4064"/>
<dbReference type="eggNOG" id="COG0779">
    <property type="taxonomic scope" value="Bacteria"/>
</dbReference>
<dbReference type="Proteomes" id="UP000000605">
    <property type="component" value="Chromosome 1"/>
</dbReference>
<dbReference type="GO" id="GO:0005829">
    <property type="term" value="C:cytosol"/>
    <property type="evidence" value="ECO:0007669"/>
    <property type="project" value="TreeGrafter"/>
</dbReference>
<dbReference type="GO" id="GO:0000028">
    <property type="term" value="P:ribosomal small subunit assembly"/>
    <property type="evidence" value="ECO:0007669"/>
    <property type="project" value="TreeGrafter"/>
</dbReference>
<dbReference type="GO" id="GO:0006412">
    <property type="term" value="P:translation"/>
    <property type="evidence" value="ECO:0007669"/>
    <property type="project" value="TreeGrafter"/>
</dbReference>
<dbReference type="CDD" id="cd01734">
    <property type="entry name" value="YlxS_C"/>
    <property type="match status" value="1"/>
</dbReference>
<dbReference type="Gene3D" id="2.30.30.180">
    <property type="entry name" value="Ribosome maturation factor RimP, C-terminal domain"/>
    <property type="match status" value="1"/>
</dbReference>
<dbReference type="Gene3D" id="3.30.300.70">
    <property type="entry name" value="RimP-like superfamily, N-terminal"/>
    <property type="match status" value="1"/>
</dbReference>
<dbReference type="HAMAP" id="MF_01077">
    <property type="entry name" value="RimP"/>
    <property type="match status" value="1"/>
</dbReference>
<dbReference type="InterPro" id="IPR003728">
    <property type="entry name" value="Ribosome_maturation_RimP"/>
</dbReference>
<dbReference type="InterPro" id="IPR028998">
    <property type="entry name" value="RimP_C"/>
</dbReference>
<dbReference type="InterPro" id="IPR036847">
    <property type="entry name" value="RimP_C_sf"/>
</dbReference>
<dbReference type="InterPro" id="IPR028989">
    <property type="entry name" value="RimP_N"/>
</dbReference>
<dbReference type="InterPro" id="IPR035956">
    <property type="entry name" value="RimP_N_sf"/>
</dbReference>
<dbReference type="NCBIfam" id="NF000929">
    <property type="entry name" value="PRK00092.2-1"/>
    <property type="match status" value="1"/>
</dbReference>
<dbReference type="PANTHER" id="PTHR33867">
    <property type="entry name" value="RIBOSOME MATURATION FACTOR RIMP"/>
    <property type="match status" value="1"/>
</dbReference>
<dbReference type="PANTHER" id="PTHR33867:SF1">
    <property type="entry name" value="RIBOSOME MATURATION FACTOR RIMP"/>
    <property type="match status" value="1"/>
</dbReference>
<dbReference type="Pfam" id="PF17384">
    <property type="entry name" value="DUF150_C"/>
    <property type="match status" value="1"/>
</dbReference>
<dbReference type="Pfam" id="PF02576">
    <property type="entry name" value="RimP_N"/>
    <property type="match status" value="1"/>
</dbReference>
<dbReference type="SUPFAM" id="SSF74942">
    <property type="entry name" value="YhbC-like, C-terminal domain"/>
    <property type="match status" value="1"/>
</dbReference>
<dbReference type="SUPFAM" id="SSF75420">
    <property type="entry name" value="YhbC-like, N-terminal domain"/>
    <property type="match status" value="1"/>
</dbReference>
<comment type="function">
    <text evidence="1">Required for maturation of 30S ribosomal subunits.</text>
</comment>
<comment type="subcellular location">
    <subcellularLocation>
        <location evidence="1">Cytoplasm</location>
    </subcellularLocation>
</comment>
<comment type="similarity">
    <text evidence="1">Belongs to the RimP family.</text>
</comment>
<evidence type="ECO:0000255" key="1">
    <source>
        <dbReference type="HAMAP-Rule" id="MF_01077"/>
    </source>
</evidence>
<proteinExistence type="inferred from homology"/>
<feature type="chain" id="PRO_0000229226" description="Ribosome maturation factor RimP">
    <location>
        <begin position="1"/>
        <end position="153"/>
    </location>
</feature>